<name>DAPB_DECAR</name>
<organism>
    <name type="scientific">Dechloromonas aromatica (strain RCB)</name>
    <dbReference type="NCBI Taxonomy" id="159087"/>
    <lineage>
        <taxon>Bacteria</taxon>
        <taxon>Pseudomonadati</taxon>
        <taxon>Pseudomonadota</taxon>
        <taxon>Betaproteobacteria</taxon>
        <taxon>Rhodocyclales</taxon>
        <taxon>Azonexaceae</taxon>
        <taxon>Dechloromonas</taxon>
    </lineage>
</organism>
<sequence>MSATRIGVVGAGGRMGRMLIEATLKDDRLVLGAAFDVPGSPALGKTAGELVGLPCDVVVTDDVAAGLKNIDCLIDFTRPQGTLVHLELCRKAGVGMVIGTTGFEADGKAVIAEAAKDIPVVFAPNMAVGVNVAFKLLETAARILNQGYDIEIVEAHHRLKVDAPSGTALRMGEVVASALGRDLEECAVYGREGVTGERDPSTIGFATVRGGDIVGDHTVMFCGIGERVEITHKASSRMPYALGSLRAARFMAGHKSGLFDMQDVLGLR</sequence>
<dbReference type="EC" id="1.17.1.8" evidence="1"/>
<dbReference type="EMBL" id="CP000089">
    <property type="protein sequence ID" value="AAZ45692.1"/>
    <property type="molecule type" value="Genomic_DNA"/>
</dbReference>
<dbReference type="SMR" id="Q47HI9"/>
<dbReference type="STRING" id="159087.Daro_0936"/>
<dbReference type="KEGG" id="dar:Daro_0936"/>
<dbReference type="eggNOG" id="COG0289">
    <property type="taxonomic scope" value="Bacteria"/>
</dbReference>
<dbReference type="HOGENOM" id="CLU_047479_2_1_4"/>
<dbReference type="OrthoDB" id="9790352at2"/>
<dbReference type="UniPathway" id="UPA00034">
    <property type="reaction ID" value="UER00018"/>
</dbReference>
<dbReference type="GO" id="GO:0005829">
    <property type="term" value="C:cytosol"/>
    <property type="evidence" value="ECO:0007669"/>
    <property type="project" value="TreeGrafter"/>
</dbReference>
<dbReference type="GO" id="GO:0008839">
    <property type="term" value="F:4-hydroxy-tetrahydrodipicolinate reductase"/>
    <property type="evidence" value="ECO:0007669"/>
    <property type="project" value="UniProtKB-EC"/>
</dbReference>
<dbReference type="GO" id="GO:0051287">
    <property type="term" value="F:NAD binding"/>
    <property type="evidence" value="ECO:0007669"/>
    <property type="project" value="UniProtKB-UniRule"/>
</dbReference>
<dbReference type="GO" id="GO:0050661">
    <property type="term" value="F:NADP binding"/>
    <property type="evidence" value="ECO:0007669"/>
    <property type="project" value="UniProtKB-UniRule"/>
</dbReference>
<dbReference type="GO" id="GO:0016726">
    <property type="term" value="F:oxidoreductase activity, acting on CH or CH2 groups, NAD or NADP as acceptor"/>
    <property type="evidence" value="ECO:0007669"/>
    <property type="project" value="UniProtKB-UniRule"/>
</dbReference>
<dbReference type="GO" id="GO:0019877">
    <property type="term" value="P:diaminopimelate biosynthetic process"/>
    <property type="evidence" value="ECO:0007669"/>
    <property type="project" value="UniProtKB-UniRule"/>
</dbReference>
<dbReference type="GO" id="GO:0009089">
    <property type="term" value="P:lysine biosynthetic process via diaminopimelate"/>
    <property type="evidence" value="ECO:0007669"/>
    <property type="project" value="UniProtKB-UniRule"/>
</dbReference>
<dbReference type="CDD" id="cd02274">
    <property type="entry name" value="DHDPR_N"/>
    <property type="match status" value="1"/>
</dbReference>
<dbReference type="FunFam" id="3.30.360.10:FF:000004">
    <property type="entry name" value="4-hydroxy-tetrahydrodipicolinate reductase"/>
    <property type="match status" value="1"/>
</dbReference>
<dbReference type="FunFam" id="3.40.50.720:FF:000048">
    <property type="entry name" value="4-hydroxy-tetrahydrodipicolinate reductase"/>
    <property type="match status" value="1"/>
</dbReference>
<dbReference type="Gene3D" id="3.30.360.10">
    <property type="entry name" value="Dihydrodipicolinate Reductase, domain 2"/>
    <property type="match status" value="1"/>
</dbReference>
<dbReference type="Gene3D" id="3.40.50.720">
    <property type="entry name" value="NAD(P)-binding Rossmann-like Domain"/>
    <property type="match status" value="1"/>
</dbReference>
<dbReference type="HAMAP" id="MF_00102">
    <property type="entry name" value="DapB"/>
    <property type="match status" value="1"/>
</dbReference>
<dbReference type="InterPro" id="IPR022663">
    <property type="entry name" value="DapB_C"/>
</dbReference>
<dbReference type="InterPro" id="IPR000846">
    <property type="entry name" value="DapB_N"/>
</dbReference>
<dbReference type="InterPro" id="IPR022664">
    <property type="entry name" value="DapB_N_CS"/>
</dbReference>
<dbReference type="InterPro" id="IPR023940">
    <property type="entry name" value="DHDPR_bac"/>
</dbReference>
<dbReference type="InterPro" id="IPR036291">
    <property type="entry name" value="NAD(P)-bd_dom_sf"/>
</dbReference>
<dbReference type="NCBIfam" id="TIGR00036">
    <property type="entry name" value="dapB"/>
    <property type="match status" value="1"/>
</dbReference>
<dbReference type="PANTHER" id="PTHR20836:SF0">
    <property type="entry name" value="4-HYDROXY-TETRAHYDRODIPICOLINATE REDUCTASE 1, CHLOROPLASTIC-RELATED"/>
    <property type="match status" value="1"/>
</dbReference>
<dbReference type="PANTHER" id="PTHR20836">
    <property type="entry name" value="DIHYDRODIPICOLINATE REDUCTASE"/>
    <property type="match status" value="1"/>
</dbReference>
<dbReference type="Pfam" id="PF05173">
    <property type="entry name" value="DapB_C"/>
    <property type="match status" value="1"/>
</dbReference>
<dbReference type="Pfam" id="PF01113">
    <property type="entry name" value="DapB_N"/>
    <property type="match status" value="1"/>
</dbReference>
<dbReference type="PIRSF" id="PIRSF000161">
    <property type="entry name" value="DHPR"/>
    <property type="match status" value="1"/>
</dbReference>
<dbReference type="SUPFAM" id="SSF55347">
    <property type="entry name" value="Glyceraldehyde-3-phosphate dehydrogenase-like, C-terminal domain"/>
    <property type="match status" value="1"/>
</dbReference>
<dbReference type="SUPFAM" id="SSF51735">
    <property type="entry name" value="NAD(P)-binding Rossmann-fold domains"/>
    <property type="match status" value="1"/>
</dbReference>
<dbReference type="PROSITE" id="PS01298">
    <property type="entry name" value="DAPB"/>
    <property type="match status" value="1"/>
</dbReference>
<accession>Q47HI9</accession>
<reference key="1">
    <citation type="journal article" date="2009" name="BMC Genomics">
        <title>Metabolic analysis of the soil microbe Dechloromonas aromatica str. RCB: indications of a surprisingly complex life-style and cryptic anaerobic pathways for aromatic degradation.</title>
        <authorList>
            <person name="Salinero K.K."/>
            <person name="Keller K."/>
            <person name="Feil W.S."/>
            <person name="Feil H."/>
            <person name="Trong S."/>
            <person name="Di Bartolo G."/>
            <person name="Lapidus A."/>
        </authorList>
    </citation>
    <scope>NUCLEOTIDE SEQUENCE [LARGE SCALE GENOMIC DNA]</scope>
    <source>
        <strain>RCB</strain>
    </source>
</reference>
<protein>
    <recommendedName>
        <fullName evidence="1">4-hydroxy-tetrahydrodipicolinate reductase</fullName>
        <shortName evidence="1">HTPA reductase</shortName>
        <ecNumber evidence="1">1.17.1.8</ecNumber>
    </recommendedName>
</protein>
<proteinExistence type="inferred from homology"/>
<gene>
    <name evidence="1" type="primary">dapB</name>
    <name type="ordered locus">Daro_0936</name>
</gene>
<comment type="function">
    <text evidence="1">Catalyzes the conversion of 4-hydroxy-tetrahydrodipicolinate (HTPA) to tetrahydrodipicolinate.</text>
</comment>
<comment type="catalytic activity">
    <reaction evidence="1">
        <text>(S)-2,3,4,5-tetrahydrodipicolinate + NAD(+) + H2O = (2S,4S)-4-hydroxy-2,3,4,5-tetrahydrodipicolinate + NADH + H(+)</text>
        <dbReference type="Rhea" id="RHEA:35323"/>
        <dbReference type="ChEBI" id="CHEBI:15377"/>
        <dbReference type="ChEBI" id="CHEBI:15378"/>
        <dbReference type="ChEBI" id="CHEBI:16845"/>
        <dbReference type="ChEBI" id="CHEBI:57540"/>
        <dbReference type="ChEBI" id="CHEBI:57945"/>
        <dbReference type="ChEBI" id="CHEBI:67139"/>
        <dbReference type="EC" id="1.17.1.8"/>
    </reaction>
</comment>
<comment type="catalytic activity">
    <reaction evidence="1">
        <text>(S)-2,3,4,5-tetrahydrodipicolinate + NADP(+) + H2O = (2S,4S)-4-hydroxy-2,3,4,5-tetrahydrodipicolinate + NADPH + H(+)</text>
        <dbReference type="Rhea" id="RHEA:35331"/>
        <dbReference type="ChEBI" id="CHEBI:15377"/>
        <dbReference type="ChEBI" id="CHEBI:15378"/>
        <dbReference type="ChEBI" id="CHEBI:16845"/>
        <dbReference type="ChEBI" id="CHEBI:57783"/>
        <dbReference type="ChEBI" id="CHEBI:58349"/>
        <dbReference type="ChEBI" id="CHEBI:67139"/>
        <dbReference type="EC" id="1.17.1.8"/>
    </reaction>
</comment>
<comment type="pathway">
    <text evidence="1">Amino-acid biosynthesis; L-lysine biosynthesis via DAP pathway; (S)-tetrahydrodipicolinate from L-aspartate: step 4/4.</text>
</comment>
<comment type="subcellular location">
    <subcellularLocation>
        <location evidence="1">Cytoplasm</location>
    </subcellularLocation>
</comment>
<comment type="similarity">
    <text evidence="1">Belongs to the DapB family.</text>
</comment>
<comment type="caution">
    <text evidence="2">Was originally thought to be a dihydrodipicolinate reductase (DHDPR), catalyzing the conversion of dihydrodipicolinate to tetrahydrodipicolinate. However, it was shown in E.coli that the substrate of the enzymatic reaction is not dihydrodipicolinate (DHDP) but in fact (2S,4S)-4-hydroxy-2,3,4,5-tetrahydrodipicolinic acid (HTPA), the product released by the DapA-catalyzed reaction.</text>
</comment>
<evidence type="ECO:0000255" key="1">
    <source>
        <dbReference type="HAMAP-Rule" id="MF_00102"/>
    </source>
</evidence>
<evidence type="ECO:0000305" key="2"/>
<keyword id="KW-0028">Amino-acid biosynthesis</keyword>
<keyword id="KW-0963">Cytoplasm</keyword>
<keyword id="KW-0220">Diaminopimelate biosynthesis</keyword>
<keyword id="KW-0457">Lysine biosynthesis</keyword>
<keyword id="KW-0520">NAD</keyword>
<keyword id="KW-0521">NADP</keyword>
<keyword id="KW-0560">Oxidoreductase</keyword>
<feature type="chain" id="PRO_0000228342" description="4-hydroxy-tetrahydrodipicolinate reductase">
    <location>
        <begin position="1"/>
        <end position="268"/>
    </location>
</feature>
<feature type="active site" description="Proton donor/acceptor" evidence="1">
    <location>
        <position position="156"/>
    </location>
</feature>
<feature type="active site" description="Proton donor" evidence="1">
    <location>
        <position position="160"/>
    </location>
</feature>
<feature type="binding site" evidence="1">
    <location>
        <begin position="10"/>
        <end position="15"/>
    </location>
    <ligand>
        <name>NAD(+)</name>
        <dbReference type="ChEBI" id="CHEBI:57540"/>
    </ligand>
</feature>
<feature type="binding site" evidence="1">
    <location>
        <position position="36"/>
    </location>
    <ligand>
        <name>NAD(+)</name>
        <dbReference type="ChEBI" id="CHEBI:57540"/>
    </ligand>
</feature>
<feature type="binding site" evidence="1">
    <location>
        <begin position="99"/>
        <end position="101"/>
    </location>
    <ligand>
        <name>NAD(+)</name>
        <dbReference type="ChEBI" id="CHEBI:57540"/>
    </ligand>
</feature>
<feature type="binding site" evidence="1">
    <location>
        <begin position="123"/>
        <end position="126"/>
    </location>
    <ligand>
        <name>NAD(+)</name>
        <dbReference type="ChEBI" id="CHEBI:57540"/>
    </ligand>
</feature>
<feature type="binding site" evidence="1">
    <location>
        <position position="157"/>
    </location>
    <ligand>
        <name>(S)-2,3,4,5-tetrahydrodipicolinate</name>
        <dbReference type="ChEBI" id="CHEBI:16845"/>
    </ligand>
</feature>
<feature type="binding site" evidence="1">
    <location>
        <begin position="166"/>
        <end position="167"/>
    </location>
    <ligand>
        <name>(S)-2,3,4,5-tetrahydrodipicolinate</name>
        <dbReference type="ChEBI" id="CHEBI:16845"/>
    </ligand>
</feature>